<gene>
    <name evidence="1" type="primary">nuoI</name>
    <name type="ordered locus">MAV_4041</name>
</gene>
<proteinExistence type="inferred from homology"/>
<name>NUOI_MYCA1</name>
<protein>
    <recommendedName>
        <fullName evidence="1">NADH-quinone oxidoreductase subunit I</fullName>
        <ecNumber evidence="1">7.1.1.-</ecNumber>
    </recommendedName>
    <alternativeName>
        <fullName evidence="1">NADH dehydrogenase I subunit I</fullName>
    </alternativeName>
    <alternativeName>
        <fullName evidence="1">NDH-1 subunit I</fullName>
    </alternativeName>
</protein>
<feature type="chain" id="PRO_0000298512" description="NADH-quinone oxidoreductase subunit I">
    <location>
        <begin position="1"/>
        <end position="181"/>
    </location>
</feature>
<feature type="domain" description="4Fe-4S ferredoxin-type 1" evidence="1">
    <location>
        <begin position="44"/>
        <end position="74"/>
    </location>
</feature>
<feature type="domain" description="4Fe-4S ferredoxin-type 2" evidence="1">
    <location>
        <begin position="90"/>
        <end position="119"/>
    </location>
</feature>
<feature type="binding site" evidence="1">
    <location>
        <position position="54"/>
    </location>
    <ligand>
        <name>[4Fe-4S] cluster</name>
        <dbReference type="ChEBI" id="CHEBI:49883"/>
        <label>1</label>
    </ligand>
</feature>
<feature type="binding site" evidence="1">
    <location>
        <position position="57"/>
    </location>
    <ligand>
        <name>[4Fe-4S] cluster</name>
        <dbReference type="ChEBI" id="CHEBI:49883"/>
        <label>1</label>
    </ligand>
</feature>
<feature type="binding site" evidence="1">
    <location>
        <position position="60"/>
    </location>
    <ligand>
        <name>[4Fe-4S] cluster</name>
        <dbReference type="ChEBI" id="CHEBI:49883"/>
        <label>1</label>
    </ligand>
</feature>
<feature type="binding site" evidence="1">
    <location>
        <position position="64"/>
    </location>
    <ligand>
        <name>[4Fe-4S] cluster</name>
        <dbReference type="ChEBI" id="CHEBI:49883"/>
        <label>2</label>
    </ligand>
</feature>
<feature type="binding site" evidence="1">
    <location>
        <position position="99"/>
    </location>
    <ligand>
        <name>[4Fe-4S] cluster</name>
        <dbReference type="ChEBI" id="CHEBI:49883"/>
        <label>2</label>
    </ligand>
</feature>
<feature type="binding site" evidence="1">
    <location>
        <position position="102"/>
    </location>
    <ligand>
        <name>[4Fe-4S] cluster</name>
        <dbReference type="ChEBI" id="CHEBI:49883"/>
        <label>2</label>
    </ligand>
</feature>
<feature type="binding site" evidence="1">
    <location>
        <position position="105"/>
    </location>
    <ligand>
        <name>[4Fe-4S] cluster</name>
        <dbReference type="ChEBI" id="CHEBI:49883"/>
        <label>2</label>
    </ligand>
</feature>
<feature type="binding site" evidence="1">
    <location>
        <position position="109"/>
    </location>
    <ligand>
        <name>[4Fe-4S] cluster</name>
        <dbReference type="ChEBI" id="CHEBI:49883"/>
        <label>1</label>
    </ligand>
</feature>
<sequence length="181" mass="20219">MAKFLDAVAGFGVTFASMFKKHVTEEYPEKPGPVAPRYHGRHQLNRYPDGLEKCIGCELCAWACPADAIYVEGADNTEELRYSPGERYGRVYQINYLRCIGCGLCVEACPTRALTMTNDYEMADDNRADLIYEKDRLLAPLLPEMTAPPHPRAPGATDKDYYLGNVTAHGLREAQRAGEPR</sequence>
<evidence type="ECO:0000255" key="1">
    <source>
        <dbReference type="HAMAP-Rule" id="MF_01351"/>
    </source>
</evidence>
<keyword id="KW-0004">4Fe-4S</keyword>
<keyword id="KW-1003">Cell membrane</keyword>
<keyword id="KW-0408">Iron</keyword>
<keyword id="KW-0411">Iron-sulfur</keyword>
<keyword id="KW-0472">Membrane</keyword>
<keyword id="KW-0479">Metal-binding</keyword>
<keyword id="KW-0520">NAD</keyword>
<keyword id="KW-0874">Quinone</keyword>
<keyword id="KW-0677">Repeat</keyword>
<keyword id="KW-1278">Translocase</keyword>
<comment type="function">
    <text evidence="1">NDH-1 shuttles electrons from NADH, via FMN and iron-sulfur (Fe-S) centers, to quinones in the respiratory chain. The immediate electron acceptor for the enzyme in this species is believed to be menaquinone. Couples the redox reaction to proton translocation (for every two electrons transferred, four hydrogen ions are translocated across the cytoplasmic membrane), and thus conserves the redox energy in a proton gradient.</text>
</comment>
<comment type="catalytic activity">
    <reaction evidence="1">
        <text>a quinone + NADH + 5 H(+)(in) = a quinol + NAD(+) + 4 H(+)(out)</text>
        <dbReference type="Rhea" id="RHEA:57888"/>
        <dbReference type="ChEBI" id="CHEBI:15378"/>
        <dbReference type="ChEBI" id="CHEBI:24646"/>
        <dbReference type="ChEBI" id="CHEBI:57540"/>
        <dbReference type="ChEBI" id="CHEBI:57945"/>
        <dbReference type="ChEBI" id="CHEBI:132124"/>
    </reaction>
</comment>
<comment type="cofactor">
    <cofactor evidence="1">
        <name>[4Fe-4S] cluster</name>
        <dbReference type="ChEBI" id="CHEBI:49883"/>
    </cofactor>
    <text evidence="1">Binds 2 [4Fe-4S] clusters per subunit.</text>
</comment>
<comment type="subunit">
    <text evidence="1">NDH-1 is composed of 14 different subunits. Subunits NuoA, H, J, K, L, M, N constitute the membrane sector of the complex.</text>
</comment>
<comment type="subcellular location">
    <subcellularLocation>
        <location evidence="1">Cell membrane</location>
        <topology evidence="1">Peripheral membrane protein</topology>
    </subcellularLocation>
</comment>
<comment type="similarity">
    <text evidence="1">Belongs to the complex I 23 kDa subunit family.</text>
</comment>
<reference key="1">
    <citation type="submission" date="2006-10" db="EMBL/GenBank/DDBJ databases">
        <authorList>
            <person name="Fleischmann R.D."/>
            <person name="Dodson R.J."/>
            <person name="Haft D.H."/>
            <person name="Merkel J.S."/>
            <person name="Nelson W.C."/>
            <person name="Fraser C.M."/>
        </authorList>
    </citation>
    <scope>NUCLEOTIDE SEQUENCE [LARGE SCALE GENOMIC DNA]</scope>
    <source>
        <strain>104</strain>
    </source>
</reference>
<dbReference type="EC" id="7.1.1.-" evidence="1"/>
<dbReference type="EMBL" id="CP000479">
    <property type="protein sequence ID" value="ABK68840.1"/>
    <property type="molecule type" value="Genomic_DNA"/>
</dbReference>
<dbReference type="SMR" id="A0QJV5"/>
<dbReference type="KEGG" id="mav:MAV_4041"/>
<dbReference type="HOGENOM" id="CLU_067218_4_0_11"/>
<dbReference type="Proteomes" id="UP000001574">
    <property type="component" value="Chromosome"/>
</dbReference>
<dbReference type="GO" id="GO:0005886">
    <property type="term" value="C:plasma membrane"/>
    <property type="evidence" value="ECO:0007669"/>
    <property type="project" value="UniProtKB-SubCell"/>
</dbReference>
<dbReference type="GO" id="GO:0051539">
    <property type="term" value="F:4 iron, 4 sulfur cluster binding"/>
    <property type="evidence" value="ECO:0007669"/>
    <property type="project" value="UniProtKB-KW"/>
</dbReference>
<dbReference type="GO" id="GO:0005506">
    <property type="term" value="F:iron ion binding"/>
    <property type="evidence" value="ECO:0007669"/>
    <property type="project" value="UniProtKB-UniRule"/>
</dbReference>
<dbReference type="GO" id="GO:0050136">
    <property type="term" value="F:NADH:ubiquinone reductase (non-electrogenic) activity"/>
    <property type="evidence" value="ECO:0007669"/>
    <property type="project" value="UniProtKB-UniRule"/>
</dbReference>
<dbReference type="GO" id="GO:0048038">
    <property type="term" value="F:quinone binding"/>
    <property type="evidence" value="ECO:0007669"/>
    <property type="project" value="UniProtKB-KW"/>
</dbReference>
<dbReference type="GO" id="GO:0009060">
    <property type="term" value="P:aerobic respiration"/>
    <property type="evidence" value="ECO:0007669"/>
    <property type="project" value="TreeGrafter"/>
</dbReference>
<dbReference type="FunFam" id="3.30.70.3270:FF:000007">
    <property type="entry name" value="NADH-quinone oxidoreductase subunit I"/>
    <property type="match status" value="1"/>
</dbReference>
<dbReference type="Gene3D" id="3.30.70.3270">
    <property type="match status" value="1"/>
</dbReference>
<dbReference type="HAMAP" id="MF_01351">
    <property type="entry name" value="NDH1_NuoI"/>
    <property type="match status" value="1"/>
</dbReference>
<dbReference type="InterPro" id="IPR017896">
    <property type="entry name" value="4Fe4S_Fe-S-bd"/>
</dbReference>
<dbReference type="InterPro" id="IPR017900">
    <property type="entry name" value="4Fe4S_Fe_S_CS"/>
</dbReference>
<dbReference type="InterPro" id="IPR010226">
    <property type="entry name" value="NADH_quinone_OxRdtase_chainI"/>
</dbReference>
<dbReference type="NCBIfam" id="TIGR01971">
    <property type="entry name" value="NuoI"/>
    <property type="match status" value="1"/>
</dbReference>
<dbReference type="NCBIfam" id="NF004537">
    <property type="entry name" value="PRK05888.1-3"/>
    <property type="match status" value="1"/>
</dbReference>
<dbReference type="PANTHER" id="PTHR10849:SF20">
    <property type="entry name" value="NADH DEHYDROGENASE [UBIQUINONE] IRON-SULFUR PROTEIN 8, MITOCHONDRIAL"/>
    <property type="match status" value="1"/>
</dbReference>
<dbReference type="PANTHER" id="PTHR10849">
    <property type="entry name" value="NADH DEHYDROGENASE UBIQUINONE IRON-SULFUR PROTEIN 8, MITOCHONDRIAL"/>
    <property type="match status" value="1"/>
</dbReference>
<dbReference type="Pfam" id="PF12838">
    <property type="entry name" value="Fer4_7"/>
    <property type="match status" value="1"/>
</dbReference>
<dbReference type="SUPFAM" id="SSF54862">
    <property type="entry name" value="4Fe-4S ferredoxins"/>
    <property type="match status" value="1"/>
</dbReference>
<dbReference type="PROSITE" id="PS00198">
    <property type="entry name" value="4FE4S_FER_1"/>
    <property type="match status" value="2"/>
</dbReference>
<dbReference type="PROSITE" id="PS51379">
    <property type="entry name" value="4FE4S_FER_2"/>
    <property type="match status" value="2"/>
</dbReference>
<organism>
    <name type="scientific">Mycobacterium avium (strain 104)</name>
    <dbReference type="NCBI Taxonomy" id="243243"/>
    <lineage>
        <taxon>Bacteria</taxon>
        <taxon>Bacillati</taxon>
        <taxon>Actinomycetota</taxon>
        <taxon>Actinomycetes</taxon>
        <taxon>Mycobacteriales</taxon>
        <taxon>Mycobacteriaceae</taxon>
        <taxon>Mycobacterium</taxon>
        <taxon>Mycobacterium avium complex (MAC)</taxon>
    </lineage>
</organism>
<accession>A0QJV5</accession>